<protein>
    <recommendedName>
        <fullName>Uncharacterized lipoprotein YgeQ</fullName>
    </recommendedName>
</protein>
<name>YGEQ_ECOLI</name>
<evidence type="ECO:0000255" key="1">
    <source>
        <dbReference type="PROSITE-ProRule" id="PRU00303"/>
    </source>
</evidence>
<evidence type="ECO:0000305" key="2"/>
<dbReference type="EMBL" id="U28375">
    <property type="protein sequence ID" value="AAA83045.1"/>
    <property type="status" value="ALT_INIT"/>
    <property type="molecule type" value="Genomic_DNA"/>
</dbReference>
<dbReference type="EMBL" id="U00096">
    <property type="protein sequence ID" value="AYC08239.1"/>
    <property type="molecule type" value="Genomic_DNA"/>
</dbReference>
<dbReference type="EMBL" id="AP009048">
    <property type="protein sequence ID" value="BAE76930.1"/>
    <property type="molecule type" value="Genomic_DNA"/>
</dbReference>
<dbReference type="PIR" id="H65069">
    <property type="entry name" value="H65069"/>
</dbReference>
<dbReference type="RefSeq" id="WP_000676919.1">
    <property type="nucleotide sequence ID" value="NZ_LN832404.1"/>
</dbReference>
<dbReference type="BioGRID" id="4263036">
    <property type="interactions" value="187"/>
</dbReference>
<dbReference type="DIP" id="DIP-12155N"/>
<dbReference type="FunCoup" id="Q46797">
    <property type="interactions" value="9"/>
</dbReference>
<dbReference type="IntAct" id="Q46797">
    <property type="interactions" value="1"/>
</dbReference>
<dbReference type="EnsemblBacteria" id="AYC08239">
    <property type="protein sequence ID" value="AYC08239"/>
    <property type="gene ID" value="b2863"/>
</dbReference>
<dbReference type="KEGG" id="ecj:JW5461"/>
<dbReference type="KEGG" id="ecoc:C3026_15710"/>
<dbReference type="EchoBASE" id="EB2859"/>
<dbReference type="eggNOG" id="COG3387">
    <property type="taxonomic scope" value="Bacteria"/>
</dbReference>
<dbReference type="HOGENOM" id="CLU_045369_1_0_6"/>
<dbReference type="InParanoid" id="Q46797"/>
<dbReference type="BioCyc" id="EcoCyc:G7483-MONOMER"/>
<dbReference type="PRO" id="PR:Q46797"/>
<dbReference type="Proteomes" id="UP000000625">
    <property type="component" value="Chromosome"/>
</dbReference>
<dbReference type="GO" id="GO:0005886">
    <property type="term" value="C:plasma membrane"/>
    <property type="evidence" value="ECO:0007669"/>
    <property type="project" value="UniProtKB-SubCell"/>
</dbReference>
<dbReference type="GO" id="GO:0005975">
    <property type="term" value="P:carbohydrate metabolic process"/>
    <property type="evidence" value="ECO:0007669"/>
    <property type="project" value="InterPro"/>
</dbReference>
<dbReference type="Gene3D" id="1.50.10.10">
    <property type="match status" value="1"/>
</dbReference>
<dbReference type="InterPro" id="IPR008928">
    <property type="entry name" value="6-hairpin_glycosidase_sf"/>
</dbReference>
<dbReference type="InterPro" id="IPR012341">
    <property type="entry name" value="6hp_glycosidase-like_sf"/>
</dbReference>
<dbReference type="SUPFAM" id="SSF48208">
    <property type="entry name" value="Six-hairpin glycosidases"/>
    <property type="match status" value="1"/>
</dbReference>
<dbReference type="PROSITE" id="PS51257">
    <property type="entry name" value="PROKAR_LIPOPROTEIN"/>
    <property type="match status" value="1"/>
</dbReference>
<accession>Q46797</accession>
<accession>A0A385XJM3</accession>
<accession>Q2M9X6</accession>
<proteinExistence type="inferred from homology"/>
<comment type="subcellular location">
    <subcellularLocation>
        <location evidence="1 2">Cell inner membrane</location>
        <topology evidence="1">Lipid-anchor</topology>
    </subcellularLocation>
</comment>
<comment type="miscellaneous">
    <text evidence="2">May be missing up to 250 C-terminal residues compared to orthologs.</text>
</comment>
<comment type="sequence caution" evidence="2">
    <conflict type="erroneous initiation">
        <sequence resource="EMBL-CDS" id="AAA83045"/>
    </conflict>
    <text>Extended N-terminus.</text>
</comment>
<sequence>MKGKSALTLLLAGIFSCGTCQATGAEVTSESVFNILNSTGAATDKSYLSLNPDKYPNYRLLIHSAKLQNEIKSHYTKDEIQGLLTLTENTRKLTLTEKPWGTFILASTFEDDKTAAETHYDAVWLRDSLWGYMALVSDQGNSVAAKKVLLTLWDYMSTPDQIKRMQDVISNPKRLDGIPVQMNAVHIRFDSNSPVMADVQEEGKPQLWNHKQNDALGLYLDLLIQAINTGTINAEDWQKGDRLKSVALLIAYLDKANFYVMEDS</sequence>
<keyword id="KW-0997">Cell inner membrane</keyword>
<keyword id="KW-1003">Cell membrane</keyword>
<keyword id="KW-0449">Lipoprotein</keyword>
<keyword id="KW-0472">Membrane</keyword>
<keyword id="KW-0564">Palmitate</keyword>
<keyword id="KW-1185">Reference proteome</keyword>
<keyword id="KW-0732">Signal</keyword>
<organism>
    <name type="scientific">Escherichia coli (strain K12)</name>
    <dbReference type="NCBI Taxonomy" id="83333"/>
    <lineage>
        <taxon>Bacteria</taxon>
        <taxon>Pseudomonadati</taxon>
        <taxon>Pseudomonadota</taxon>
        <taxon>Gammaproteobacteria</taxon>
        <taxon>Enterobacterales</taxon>
        <taxon>Enterobacteriaceae</taxon>
        <taxon>Escherichia</taxon>
    </lineage>
</organism>
<feature type="signal peptide" evidence="1">
    <location>
        <begin position="1"/>
        <end position="16"/>
    </location>
</feature>
<feature type="chain" id="PRO_0000169343" description="Uncharacterized lipoprotein YgeQ" evidence="1">
    <location>
        <begin position="17"/>
        <end position="264"/>
    </location>
</feature>
<feature type="lipid moiety-binding region" description="N-palmitoyl cysteine" evidence="1">
    <location>
        <position position="17"/>
    </location>
</feature>
<feature type="lipid moiety-binding region" description="S-diacylglycerol cysteine" evidence="1">
    <location>
        <position position="17"/>
    </location>
</feature>
<reference key="1">
    <citation type="journal article" date="1997" name="Science">
        <title>The complete genome sequence of Escherichia coli K-12.</title>
        <authorList>
            <person name="Blattner F.R."/>
            <person name="Plunkett G. III"/>
            <person name="Bloch C.A."/>
            <person name="Perna N.T."/>
            <person name="Burland V."/>
            <person name="Riley M."/>
            <person name="Collado-Vides J."/>
            <person name="Glasner J.D."/>
            <person name="Rode C.K."/>
            <person name="Mayhew G.F."/>
            <person name="Gregor J."/>
            <person name="Davis N.W."/>
            <person name="Kirkpatrick H.A."/>
            <person name="Goeden M.A."/>
            <person name="Rose D.J."/>
            <person name="Mau B."/>
            <person name="Shao Y."/>
        </authorList>
    </citation>
    <scope>NUCLEOTIDE SEQUENCE [LARGE SCALE GENOMIC DNA]</scope>
    <source>
        <strain>K12 / MG1655 / ATCC 47076</strain>
    </source>
</reference>
<reference key="2">
    <citation type="journal article" date="2006" name="Mol. Syst. Biol.">
        <title>Highly accurate genome sequences of Escherichia coli K-12 strains MG1655 and W3110.</title>
        <authorList>
            <person name="Hayashi K."/>
            <person name="Morooka N."/>
            <person name="Yamamoto Y."/>
            <person name="Fujita K."/>
            <person name="Isono K."/>
            <person name="Choi S."/>
            <person name="Ohtsubo E."/>
            <person name="Baba T."/>
            <person name="Wanner B.L."/>
            <person name="Mori H."/>
            <person name="Horiuchi T."/>
        </authorList>
    </citation>
    <scope>NUCLEOTIDE SEQUENCE [LARGE SCALE GENOMIC DNA]</scope>
    <source>
        <strain>K12 / W3110 / ATCC 27325 / DSM 5911</strain>
    </source>
</reference>
<gene>
    <name type="primary">ygeQ</name>
    <name type="ordered locus">b2863</name>
    <name type="ordered locus">JW5461</name>
</gene>